<feature type="chain" id="PRO_1000146921" description="Co-chaperonin GroES">
    <location>
        <begin position="1"/>
        <end position="94"/>
    </location>
</feature>
<sequence length="94" mass="9912">MLKPLGDRLVLKVEEKEQTVGGFVLAGSAQEKTKTAQVVATGQGVRTLNGDLVAPSVKTGDRVLVEAHAGLDVKDGDEKYIIVGEANILAIIEE</sequence>
<name>CH10_STRZJ</name>
<protein>
    <recommendedName>
        <fullName evidence="1">Co-chaperonin GroES</fullName>
    </recommendedName>
    <alternativeName>
        <fullName evidence="1">10 kDa chaperonin</fullName>
    </alternativeName>
    <alternativeName>
        <fullName evidence="1">Chaperonin-10</fullName>
        <shortName evidence="1">Cpn10</shortName>
    </alternativeName>
</protein>
<reference key="1">
    <citation type="journal article" date="2010" name="Genome Biol.">
        <title>Structure and dynamics of the pan-genome of Streptococcus pneumoniae and closely related species.</title>
        <authorList>
            <person name="Donati C."/>
            <person name="Hiller N.L."/>
            <person name="Tettelin H."/>
            <person name="Muzzi A."/>
            <person name="Croucher N.J."/>
            <person name="Angiuoli S.V."/>
            <person name="Oggioni M."/>
            <person name="Dunning Hotopp J.C."/>
            <person name="Hu F.Z."/>
            <person name="Riley D.R."/>
            <person name="Covacci A."/>
            <person name="Mitchell T.J."/>
            <person name="Bentley S.D."/>
            <person name="Kilian M."/>
            <person name="Ehrlich G.D."/>
            <person name="Rappuoli R."/>
            <person name="Moxon E.R."/>
            <person name="Masignani V."/>
        </authorList>
    </citation>
    <scope>NUCLEOTIDE SEQUENCE [LARGE SCALE GENOMIC DNA]</scope>
    <source>
        <strain>JJA</strain>
    </source>
</reference>
<accession>C1CGD8</accession>
<organism>
    <name type="scientific">Streptococcus pneumoniae (strain JJA)</name>
    <dbReference type="NCBI Taxonomy" id="488222"/>
    <lineage>
        <taxon>Bacteria</taxon>
        <taxon>Bacillati</taxon>
        <taxon>Bacillota</taxon>
        <taxon>Bacilli</taxon>
        <taxon>Lactobacillales</taxon>
        <taxon>Streptococcaceae</taxon>
        <taxon>Streptococcus</taxon>
    </lineage>
</organism>
<proteinExistence type="inferred from homology"/>
<evidence type="ECO:0000255" key="1">
    <source>
        <dbReference type="HAMAP-Rule" id="MF_00580"/>
    </source>
</evidence>
<dbReference type="EMBL" id="CP000919">
    <property type="protein sequence ID" value="ACO18083.1"/>
    <property type="molecule type" value="Genomic_DNA"/>
</dbReference>
<dbReference type="RefSeq" id="WP_000917299.1">
    <property type="nucleotide sequence ID" value="NC_012466.1"/>
</dbReference>
<dbReference type="SMR" id="C1CGD8"/>
<dbReference type="KEGG" id="sjj:SPJ_1841"/>
<dbReference type="HOGENOM" id="CLU_132825_1_2_9"/>
<dbReference type="Proteomes" id="UP000002206">
    <property type="component" value="Chromosome"/>
</dbReference>
<dbReference type="GO" id="GO:0005737">
    <property type="term" value="C:cytoplasm"/>
    <property type="evidence" value="ECO:0007669"/>
    <property type="project" value="UniProtKB-SubCell"/>
</dbReference>
<dbReference type="GO" id="GO:0005524">
    <property type="term" value="F:ATP binding"/>
    <property type="evidence" value="ECO:0007669"/>
    <property type="project" value="InterPro"/>
</dbReference>
<dbReference type="GO" id="GO:0046872">
    <property type="term" value="F:metal ion binding"/>
    <property type="evidence" value="ECO:0007669"/>
    <property type="project" value="TreeGrafter"/>
</dbReference>
<dbReference type="GO" id="GO:0044183">
    <property type="term" value="F:protein folding chaperone"/>
    <property type="evidence" value="ECO:0007669"/>
    <property type="project" value="InterPro"/>
</dbReference>
<dbReference type="GO" id="GO:0051087">
    <property type="term" value="F:protein-folding chaperone binding"/>
    <property type="evidence" value="ECO:0007669"/>
    <property type="project" value="TreeGrafter"/>
</dbReference>
<dbReference type="GO" id="GO:0051082">
    <property type="term" value="F:unfolded protein binding"/>
    <property type="evidence" value="ECO:0007669"/>
    <property type="project" value="TreeGrafter"/>
</dbReference>
<dbReference type="GO" id="GO:0051085">
    <property type="term" value="P:chaperone cofactor-dependent protein refolding"/>
    <property type="evidence" value="ECO:0007669"/>
    <property type="project" value="TreeGrafter"/>
</dbReference>
<dbReference type="CDD" id="cd00320">
    <property type="entry name" value="cpn10"/>
    <property type="match status" value="1"/>
</dbReference>
<dbReference type="FunFam" id="2.30.33.40:FF:000007">
    <property type="entry name" value="10 kDa chaperonin"/>
    <property type="match status" value="1"/>
</dbReference>
<dbReference type="Gene3D" id="2.30.33.40">
    <property type="entry name" value="GroES chaperonin"/>
    <property type="match status" value="1"/>
</dbReference>
<dbReference type="HAMAP" id="MF_00580">
    <property type="entry name" value="CH10"/>
    <property type="match status" value="1"/>
</dbReference>
<dbReference type="InterPro" id="IPR020818">
    <property type="entry name" value="Chaperonin_GroES"/>
</dbReference>
<dbReference type="InterPro" id="IPR037124">
    <property type="entry name" value="Chaperonin_GroES_sf"/>
</dbReference>
<dbReference type="InterPro" id="IPR018369">
    <property type="entry name" value="Chaprnonin_Cpn10_CS"/>
</dbReference>
<dbReference type="InterPro" id="IPR011032">
    <property type="entry name" value="GroES-like_sf"/>
</dbReference>
<dbReference type="NCBIfam" id="NF001528">
    <property type="entry name" value="PRK00364.1-4"/>
    <property type="match status" value="1"/>
</dbReference>
<dbReference type="PANTHER" id="PTHR10772">
    <property type="entry name" value="10 KDA HEAT SHOCK PROTEIN"/>
    <property type="match status" value="1"/>
</dbReference>
<dbReference type="PANTHER" id="PTHR10772:SF58">
    <property type="entry name" value="CO-CHAPERONIN GROES"/>
    <property type="match status" value="1"/>
</dbReference>
<dbReference type="Pfam" id="PF00166">
    <property type="entry name" value="Cpn10"/>
    <property type="match status" value="1"/>
</dbReference>
<dbReference type="PRINTS" id="PR00297">
    <property type="entry name" value="CHAPERONIN10"/>
</dbReference>
<dbReference type="SMART" id="SM00883">
    <property type="entry name" value="Cpn10"/>
    <property type="match status" value="1"/>
</dbReference>
<dbReference type="SUPFAM" id="SSF50129">
    <property type="entry name" value="GroES-like"/>
    <property type="match status" value="1"/>
</dbReference>
<dbReference type="PROSITE" id="PS00681">
    <property type="entry name" value="CHAPERONINS_CPN10"/>
    <property type="match status" value="1"/>
</dbReference>
<keyword id="KW-0143">Chaperone</keyword>
<keyword id="KW-0963">Cytoplasm</keyword>
<comment type="function">
    <text evidence="1">Together with the chaperonin GroEL, plays an essential role in assisting protein folding. The GroEL-GroES system forms a nano-cage that allows encapsulation of the non-native substrate proteins and provides a physical environment optimized to promote and accelerate protein folding. GroES binds to the apical surface of the GroEL ring, thereby capping the opening of the GroEL channel.</text>
</comment>
<comment type="subunit">
    <text evidence="1">Heptamer of 7 subunits arranged in a ring. Interacts with the chaperonin GroEL.</text>
</comment>
<comment type="subcellular location">
    <subcellularLocation>
        <location evidence="1">Cytoplasm</location>
    </subcellularLocation>
</comment>
<comment type="similarity">
    <text evidence="1">Belongs to the GroES chaperonin family.</text>
</comment>
<gene>
    <name evidence="1" type="primary">groES</name>
    <name evidence="1" type="synonym">groS</name>
    <name type="ordered locus">SPJ_1841</name>
</gene>